<name>EXRN_BPT3</name>
<organism>
    <name type="scientific">Enterobacteria phage T3</name>
    <name type="common">Bacteriophage T3</name>
    <dbReference type="NCBI Taxonomy" id="10759"/>
    <lineage>
        <taxon>Viruses</taxon>
        <taxon>Duplodnaviria</taxon>
        <taxon>Heunggongvirae</taxon>
        <taxon>Uroviricota</taxon>
        <taxon>Caudoviricetes</taxon>
        <taxon>Autographiviridae</taxon>
        <taxon>Studiervirinae</taxon>
        <taxon>Teetrevirus</taxon>
        <taxon>Teetrevirus T3</taxon>
    </lineage>
</organism>
<protein>
    <recommendedName>
        <fullName>Exodeoxyribonuclease</fullName>
        <shortName>Exonuclease</shortName>
        <ecNumber>3.1.11.3</ecNumber>
    </recommendedName>
</protein>
<keyword id="KW-0269">Exonuclease</keyword>
<keyword id="KW-0378">Hydrolase</keyword>
<keyword id="KW-0540">Nuclease</keyword>
<proteinExistence type="predicted"/>
<sequence>MALLDLKQFYELREGCDDKGILVMDGDWLVFQAMSAAEFDASWEEEIWHRCCDHAKARQILEDSIKSYETRKKAWVGAPIVLAFTDSVNWRKELVDPNYKANRKATKKPVGYFEFLEALFEREEFYCIREPMLEGDDVMGVIASNPSAFGARKAVIISCDKDFKTIPNCDFLWCTTGNILTQTKETADWWHLFQTIKGDMTDGYSGIPGWGDTAEGFLNDPFIVEPVESVLKSGKNKGQTVTKWVKRAPDATETLWDCIKSIGAKAGMTEQEIIKQGQMARILRFEEYNYIDKEIYLWTPRS</sequence>
<reference key="1">
    <citation type="journal article" date="1989" name="J. Mol. Biol.">
        <title>Sequence of bacteriophage T3 DNA from gene 2.5 through gene 9.</title>
        <authorList>
            <person name="Beck P.J."/>
            <person name="Gonzalez S."/>
            <person name="Ward C.L."/>
            <person name="Molineux I.J."/>
        </authorList>
    </citation>
    <scope>NUCLEOTIDE SEQUENCE [GENOMIC DNA]</scope>
    <source>
        <strain>Luria</strain>
    </source>
</reference>
<organismHost>
    <name type="scientific">Escherichia coli</name>
    <dbReference type="NCBI Taxonomy" id="562"/>
</organismHost>
<comment type="function">
    <text>This enzyme is essential for phage DNA replication; it is believed to function in the removal of DNA-linked RNA primers. It is also necessary for host DNA degradation and phage genetic recombination.</text>
</comment>
<comment type="catalytic activity">
    <reaction>
        <text>Exonucleolytic cleavage in the 5'- to 3'-direction to yield nucleoside 5'-phosphates.</text>
        <dbReference type="EC" id="3.1.11.3"/>
    </reaction>
</comment>
<accession>P20321</accession>
<dbReference type="EC" id="3.1.11.3"/>
<dbReference type="EMBL" id="X17255">
    <property type="protein sequence ID" value="CAA35147.1"/>
    <property type="molecule type" value="Genomic_DNA"/>
</dbReference>
<dbReference type="PIR" id="S07503">
    <property type="entry name" value="S07503"/>
</dbReference>
<dbReference type="RefSeq" id="NP_523327.1">
    <property type="nucleotide sequence ID" value="NC_003298.1"/>
</dbReference>
<dbReference type="KEGG" id="vg:927425"/>
<dbReference type="OrthoDB" id="6588at10239"/>
<dbReference type="GO" id="GO:0003677">
    <property type="term" value="F:DNA binding"/>
    <property type="evidence" value="ECO:0007669"/>
    <property type="project" value="InterPro"/>
</dbReference>
<dbReference type="GO" id="GO:0051908">
    <property type="term" value="F:double-stranded DNA 5'-3' DNA exonuclease activity"/>
    <property type="evidence" value="ECO:0007669"/>
    <property type="project" value="UniProtKB-EC"/>
</dbReference>
<dbReference type="FunFam" id="3.40.50.1010:FF:000085">
    <property type="entry name" value="Exonuclease"/>
    <property type="match status" value="1"/>
</dbReference>
<dbReference type="Gene3D" id="3.40.50.1010">
    <property type="entry name" value="5'-nuclease"/>
    <property type="match status" value="1"/>
</dbReference>
<dbReference type="InterPro" id="IPR020046">
    <property type="entry name" value="5-3_exonucl_a-hlix_arch_N"/>
</dbReference>
<dbReference type="InterPro" id="IPR029060">
    <property type="entry name" value="PIN-like_dom_sf"/>
</dbReference>
<dbReference type="Pfam" id="PF02739">
    <property type="entry name" value="5_3_exonuc_N"/>
    <property type="match status" value="1"/>
</dbReference>
<dbReference type="SUPFAM" id="SSF88723">
    <property type="entry name" value="PIN domain-like"/>
    <property type="match status" value="1"/>
</dbReference>
<feature type="chain" id="PRO_0000106504" description="Exodeoxyribonuclease">
    <location>
        <begin position="1"/>
        <end position="302"/>
    </location>
</feature>
<gene>
    <name type="primary">6</name>
</gene>